<organism>
    <name type="scientific">Rickettsia peacockii (strain Rustic)</name>
    <dbReference type="NCBI Taxonomy" id="562019"/>
    <lineage>
        <taxon>Bacteria</taxon>
        <taxon>Pseudomonadati</taxon>
        <taxon>Pseudomonadota</taxon>
        <taxon>Alphaproteobacteria</taxon>
        <taxon>Rickettsiales</taxon>
        <taxon>Rickettsiaceae</taxon>
        <taxon>Rickettsieae</taxon>
        <taxon>Rickettsia</taxon>
        <taxon>spotted fever group</taxon>
    </lineage>
</organism>
<comment type="function">
    <text evidence="1">Catalyzes the reversible oxidation of malate to oxaloacetate.</text>
</comment>
<comment type="catalytic activity">
    <reaction evidence="1">
        <text>(S)-malate + NAD(+) = oxaloacetate + NADH + H(+)</text>
        <dbReference type="Rhea" id="RHEA:21432"/>
        <dbReference type="ChEBI" id="CHEBI:15378"/>
        <dbReference type="ChEBI" id="CHEBI:15589"/>
        <dbReference type="ChEBI" id="CHEBI:16452"/>
        <dbReference type="ChEBI" id="CHEBI:57540"/>
        <dbReference type="ChEBI" id="CHEBI:57945"/>
        <dbReference type="EC" id="1.1.1.37"/>
    </reaction>
</comment>
<comment type="similarity">
    <text evidence="1">Belongs to the LDH/MDH superfamily. MDH type 3 family.</text>
</comment>
<accession>C4K2E2</accession>
<protein>
    <recommendedName>
        <fullName evidence="1">Malate dehydrogenase</fullName>
        <ecNumber evidence="1">1.1.1.37</ecNumber>
    </recommendedName>
</protein>
<keyword id="KW-0520">NAD</keyword>
<keyword id="KW-0560">Oxidoreductase</keyword>
<keyword id="KW-0816">Tricarboxylic acid cycle</keyword>
<name>MDH_RICPU</name>
<sequence>MKQNPKISLIGSGNIGGTLAHLISLRELGDIVLFDVTEGVPQGKALDLMQAGTIAGSDIKIKGTNDYKDIEGSDAIIITAGLPRKPGMSRDDLISINTGIMKTVAANVKKYAPDAFVIVITNPLDVMVYVMLKESGLPHNKVIGMAGVLDSSRFNLFLAEEFKVSVSNVNSMVLGGHGDAMVPLARYSTISGVPIPDLIKMGLSSNENIEKIIDRTRNGGGEIVALLKTGSAYYAPAASAIEMLESYLKDKRQILTCAAHLQGEYGVHDLYVGVPIMIGKEGVLKVIELQLTAEEKALFDKSVEGVKKLIETIKEMIKSYY</sequence>
<evidence type="ECO:0000255" key="1">
    <source>
        <dbReference type="HAMAP-Rule" id="MF_00487"/>
    </source>
</evidence>
<gene>
    <name evidence="1" type="primary">mdh</name>
    <name type="ordered locus">RPR_05955</name>
</gene>
<proteinExistence type="inferred from homology"/>
<dbReference type="EC" id="1.1.1.37" evidence="1"/>
<dbReference type="EMBL" id="CP001227">
    <property type="protein sequence ID" value="ACR47739.1"/>
    <property type="molecule type" value="Genomic_DNA"/>
</dbReference>
<dbReference type="RefSeq" id="WP_012736928.1">
    <property type="nucleotide sequence ID" value="NC_012730.1"/>
</dbReference>
<dbReference type="SMR" id="C4K2E2"/>
<dbReference type="KEGG" id="rpk:RPR_05955"/>
<dbReference type="HOGENOM" id="CLU_045401_2_1_5"/>
<dbReference type="Proteomes" id="UP000005015">
    <property type="component" value="Chromosome"/>
</dbReference>
<dbReference type="GO" id="GO:0004459">
    <property type="term" value="F:L-lactate dehydrogenase activity"/>
    <property type="evidence" value="ECO:0007669"/>
    <property type="project" value="TreeGrafter"/>
</dbReference>
<dbReference type="GO" id="GO:0030060">
    <property type="term" value="F:L-malate dehydrogenase (NAD+) activity"/>
    <property type="evidence" value="ECO:0007669"/>
    <property type="project" value="UniProtKB-UniRule"/>
</dbReference>
<dbReference type="GO" id="GO:0006089">
    <property type="term" value="P:lactate metabolic process"/>
    <property type="evidence" value="ECO:0007669"/>
    <property type="project" value="TreeGrafter"/>
</dbReference>
<dbReference type="GO" id="GO:0006099">
    <property type="term" value="P:tricarboxylic acid cycle"/>
    <property type="evidence" value="ECO:0007669"/>
    <property type="project" value="UniProtKB-UniRule"/>
</dbReference>
<dbReference type="CDD" id="cd01339">
    <property type="entry name" value="LDH-like_MDH"/>
    <property type="match status" value="1"/>
</dbReference>
<dbReference type="FunFam" id="3.40.50.720:FF:000018">
    <property type="entry name" value="Malate dehydrogenase"/>
    <property type="match status" value="1"/>
</dbReference>
<dbReference type="FunFam" id="3.90.110.10:FF:000004">
    <property type="entry name" value="Malate dehydrogenase"/>
    <property type="match status" value="1"/>
</dbReference>
<dbReference type="Gene3D" id="3.90.110.10">
    <property type="entry name" value="Lactate dehydrogenase/glycoside hydrolase, family 4, C-terminal"/>
    <property type="match status" value="1"/>
</dbReference>
<dbReference type="Gene3D" id="3.40.50.720">
    <property type="entry name" value="NAD(P)-binding Rossmann-like Domain"/>
    <property type="match status" value="1"/>
</dbReference>
<dbReference type="HAMAP" id="MF_00487">
    <property type="entry name" value="Malate_dehydrog_3"/>
    <property type="match status" value="1"/>
</dbReference>
<dbReference type="InterPro" id="IPR001557">
    <property type="entry name" value="L-lactate/malate_DH"/>
</dbReference>
<dbReference type="InterPro" id="IPR022383">
    <property type="entry name" value="Lactate/malate_DH_C"/>
</dbReference>
<dbReference type="InterPro" id="IPR001236">
    <property type="entry name" value="Lactate/malate_DH_N"/>
</dbReference>
<dbReference type="InterPro" id="IPR015955">
    <property type="entry name" value="Lactate_DH/Glyco_Ohase_4_C"/>
</dbReference>
<dbReference type="InterPro" id="IPR011275">
    <property type="entry name" value="Malate_DH_type3"/>
</dbReference>
<dbReference type="InterPro" id="IPR036291">
    <property type="entry name" value="NAD(P)-bd_dom_sf"/>
</dbReference>
<dbReference type="NCBIfam" id="TIGR01763">
    <property type="entry name" value="MalateDH_bact"/>
    <property type="match status" value="1"/>
</dbReference>
<dbReference type="NCBIfam" id="NF004863">
    <property type="entry name" value="PRK06223.1"/>
    <property type="match status" value="1"/>
</dbReference>
<dbReference type="PANTHER" id="PTHR43128">
    <property type="entry name" value="L-2-HYDROXYCARBOXYLATE DEHYDROGENASE (NAD(P)(+))"/>
    <property type="match status" value="1"/>
</dbReference>
<dbReference type="PANTHER" id="PTHR43128:SF16">
    <property type="entry name" value="L-LACTATE DEHYDROGENASE"/>
    <property type="match status" value="1"/>
</dbReference>
<dbReference type="Pfam" id="PF02866">
    <property type="entry name" value="Ldh_1_C"/>
    <property type="match status" value="1"/>
</dbReference>
<dbReference type="Pfam" id="PF00056">
    <property type="entry name" value="Ldh_1_N"/>
    <property type="match status" value="1"/>
</dbReference>
<dbReference type="PIRSF" id="PIRSF000102">
    <property type="entry name" value="Lac_mal_DH"/>
    <property type="match status" value="1"/>
</dbReference>
<dbReference type="PRINTS" id="PR00086">
    <property type="entry name" value="LLDHDRGNASE"/>
</dbReference>
<dbReference type="SUPFAM" id="SSF56327">
    <property type="entry name" value="LDH C-terminal domain-like"/>
    <property type="match status" value="1"/>
</dbReference>
<dbReference type="SUPFAM" id="SSF51735">
    <property type="entry name" value="NAD(P)-binding Rossmann-fold domains"/>
    <property type="match status" value="1"/>
</dbReference>
<reference key="1">
    <citation type="journal article" date="2009" name="PLoS ONE">
        <title>Genome sequence of the endosymbiont Rickettsia peacockii and comparison with virulent Rickettsia rickettsii: identification of virulence factors.</title>
        <authorList>
            <person name="Felsheim R.F."/>
            <person name="Kurtti T.J."/>
            <person name="Munderloh U.G."/>
        </authorList>
    </citation>
    <scope>NUCLEOTIDE SEQUENCE [LARGE SCALE GENOMIC DNA]</scope>
    <source>
        <strain>Rustic</strain>
    </source>
</reference>
<feature type="chain" id="PRO_1000206446" description="Malate dehydrogenase">
    <location>
        <begin position="1"/>
        <end position="321"/>
    </location>
</feature>
<feature type="active site" description="Proton acceptor" evidence="1">
    <location>
        <position position="177"/>
    </location>
</feature>
<feature type="binding site" evidence="1">
    <location>
        <begin position="11"/>
        <end position="16"/>
    </location>
    <ligand>
        <name>NAD(+)</name>
        <dbReference type="ChEBI" id="CHEBI:57540"/>
    </ligand>
</feature>
<feature type="binding site" evidence="1">
    <location>
        <position position="35"/>
    </location>
    <ligand>
        <name>NAD(+)</name>
        <dbReference type="ChEBI" id="CHEBI:57540"/>
    </ligand>
</feature>
<feature type="binding site" evidence="1">
    <location>
        <position position="84"/>
    </location>
    <ligand>
        <name>substrate</name>
    </ligand>
</feature>
<feature type="binding site" evidence="1">
    <location>
        <position position="90"/>
    </location>
    <ligand>
        <name>substrate</name>
    </ligand>
</feature>
<feature type="binding site" evidence="1">
    <location>
        <position position="97"/>
    </location>
    <ligand>
        <name>NAD(+)</name>
        <dbReference type="ChEBI" id="CHEBI:57540"/>
    </ligand>
</feature>
<feature type="binding site" evidence="1">
    <location>
        <begin position="120"/>
        <end position="122"/>
    </location>
    <ligand>
        <name>NAD(+)</name>
        <dbReference type="ChEBI" id="CHEBI:57540"/>
    </ligand>
</feature>
<feature type="binding site" evidence="1">
    <location>
        <position position="122"/>
    </location>
    <ligand>
        <name>substrate</name>
    </ligand>
</feature>
<feature type="binding site" evidence="1">
    <location>
        <position position="153"/>
    </location>
    <ligand>
        <name>substrate</name>
    </ligand>
</feature>